<evidence type="ECO:0000255" key="1">
    <source>
        <dbReference type="HAMAP-Rule" id="MF_00071"/>
    </source>
</evidence>
<name>LEPA_ECOUT</name>
<reference key="1">
    <citation type="journal article" date="2006" name="Proc. Natl. Acad. Sci. U.S.A.">
        <title>Identification of genes subject to positive selection in uropathogenic strains of Escherichia coli: a comparative genomics approach.</title>
        <authorList>
            <person name="Chen S.L."/>
            <person name="Hung C.-S."/>
            <person name="Xu J."/>
            <person name="Reigstad C.S."/>
            <person name="Magrini V."/>
            <person name="Sabo A."/>
            <person name="Blasiar D."/>
            <person name="Bieri T."/>
            <person name="Meyer R.R."/>
            <person name="Ozersky P."/>
            <person name="Armstrong J.R."/>
            <person name="Fulton R.S."/>
            <person name="Latreille J.P."/>
            <person name="Spieth J."/>
            <person name="Hooton T.M."/>
            <person name="Mardis E.R."/>
            <person name="Hultgren S.J."/>
            <person name="Gordon J.I."/>
        </authorList>
    </citation>
    <scope>NUCLEOTIDE SEQUENCE [LARGE SCALE GENOMIC DNA]</scope>
    <source>
        <strain>UTI89 / UPEC</strain>
    </source>
</reference>
<dbReference type="EC" id="3.6.5.n1" evidence="1"/>
<dbReference type="EMBL" id="CP000243">
    <property type="protein sequence ID" value="ABE08351.1"/>
    <property type="molecule type" value="Genomic_DNA"/>
</dbReference>
<dbReference type="RefSeq" id="WP_000790169.1">
    <property type="nucleotide sequence ID" value="NZ_CP064825.1"/>
</dbReference>
<dbReference type="SMR" id="Q1R8G3"/>
<dbReference type="KEGG" id="eci:UTI89_C2891"/>
<dbReference type="HOGENOM" id="CLU_009995_3_3_6"/>
<dbReference type="Proteomes" id="UP000001952">
    <property type="component" value="Chromosome"/>
</dbReference>
<dbReference type="GO" id="GO:0005886">
    <property type="term" value="C:plasma membrane"/>
    <property type="evidence" value="ECO:0007669"/>
    <property type="project" value="UniProtKB-SubCell"/>
</dbReference>
<dbReference type="GO" id="GO:0005525">
    <property type="term" value="F:GTP binding"/>
    <property type="evidence" value="ECO:0007669"/>
    <property type="project" value="UniProtKB-UniRule"/>
</dbReference>
<dbReference type="GO" id="GO:0003924">
    <property type="term" value="F:GTPase activity"/>
    <property type="evidence" value="ECO:0007669"/>
    <property type="project" value="UniProtKB-UniRule"/>
</dbReference>
<dbReference type="GO" id="GO:0097216">
    <property type="term" value="F:guanosine tetraphosphate binding"/>
    <property type="evidence" value="ECO:0007669"/>
    <property type="project" value="UniProtKB-ARBA"/>
</dbReference>
<dbReference type="GO" id="GO:0043022">
    <property type="term" value="F:ribosome binding"/>
    <property type="evidence" value="ECO:0007669"/>
    <property type="project" value="UniProtKB-UniRule"/>
</dbReference>
<dbReference type="GO" id="GO:0003746">
    <property type="term" value="F:translation elongation factor activity"/>
    <property type="evidence" value="ECO:0007669"/>
    <property type="project" value="UniProtKB-UniRule"/>
</dbReference>
<dbReference type="GO" id="GO:0045727">
    <property type="term" value="P:positive regulation of translation"/>
    <property type="evidence" value="ECO:0007669"/>
    <property type="project" value="UniProtKB-UniRule"/>
</dbReference>
<dbReference type="CDD" id="cd03699">
    <property type="entry name" value="EF4_II"/>
    <property type="match status" value="1"/>
</dbReference>
<dbReference type="CDD" id="cd16260">
    <property type="entry name" value="EF4_III"/>
    <property type="match status" value="1"/>
</dbReference>
<dbReference type="CDD" id="cd01890">
    <property type="entry name" value="LepA"/>
    <property type="match status" value="1"/>
</dbReference>
<dbReference type="CDD" id="cd03709">
    <property type="entry name" value="lepA_C"/>
    <property type="match status" value="1"/>
</dbReference>
<dbReference type="FunFam" id="3.30.70.240:FF:000005">
    <property type="entry name" value="Elongation factor 4"/>
    <property type="match status" value="1"/>
</dbReference>
<dbReference type="FunFam" id="3.40.50.300:FF:000078">
    <property type="entry name" value="Elongation factor 4"/>
    <property type="match status" value="1"/>
</dbReference>
<dbReference type="FunFam" id="2.40.30.10:FF:000015">
    <property type="entry name" value="Translation factor GUF1, mitochondrial"/>
    <property type="match status" value="1"/>
</dbReference>
<dbReference type="FunFam" id="3.30.70.2570:FF:000001">
    <property type="entry name" value="Translation factor GUF1, mitochondrial"/>
    <property type="match status" value="1"/>
</dbReference>
<dbReference type="FunFam" id="3.30.70.870:FF:000004">
    <property type="entry name" value="Translation factor GUF1, mitochondrial"/>
    <property type="match status" value="1"/>
</dbReference>
<dbReference type="Gene3D" id="3.30.70.240">
    <property type="match status" value="1"/>
</dbReference>
<dbReference type="Gene3D" id="3.30.70.2570">
    <property type="entry name" value="Elongation factor 4, C-terminal domain"/>
    <property type="match status" value="1"/>
</dbReference>
<dbReference type="Gene3D" id="3.30.70.870">
    <property type="entry name" value="Elongation Factor G (Translational Gtpase), domain 3"/>
    <property type="match status" value="1"/>
</dbReference>
<dbReference type="Gene3D" id="3.40.50.300">
    <property type="entry name" value="P-loop containing nucleotide triphosphate hydrolases"/>
    <property type="match status" value="1"/>
</dbReference>
<dbReference type="Gene3D" id="2.40.30.10">
    <property type="entry name" value="Translation factors"/>
    <property type="match status" value="1"/>
</dbReference>
<dbReference type="HAMAP" id="MF_00071">
    <property type="entry name" value="LepA"/>
    <property type="match status" value="1"/>
</dbReference>
<dbReference type="InterPro" id="IPR006297">
    <property type="entry name" value="EF-4"/>
</dbReference>
<dbReference type="InterPro" id="IPR035647">
    <property type="entry name" value="EFG_III/V"/>
</dbReference>
<dbReference type="InterPro" id="IPR000640">
    <property type="entry name" value="EFG_V-like"/>
</dbReference>
<dbReference type="InterPro" id="IPR004161">
    <property type="entry name" value="EFTu-like_2"/>
</dbReference>
<dbReference type="InterPro" id="IPR031157">
    <property type="entry name" value="G_TR_CS"/>
</dbReference>
<dbReference type="InterPro" id="IPR038363">
    <property type="entry name" value="LepA_C_sf"/>
</dbReference>
<dbReference type="InterPro" id="IPR013842">
    <property type="entry name" value="LepA_CTD"/>
</dbReference>
<dbReference type="InterPro" id="IPR035654">
    <property type="entry name" value="LepA_IV"/>
</dbReference>
<dbReference type="InterPro" id="IPR027417">
    <property type="entry name" value="P-loop_NTPase"/>
</dbReference>
<dbReference type="InterPro" id="IPR005225">
    <property type="entry name" value="Small_GTP-bd"/>
</dbReference>
<dbReference type="InterPro" id="IPR000795">
    <property type="entry name" value="T_Tr_GTP-bd_dom"/>
</dbReference>
<dbReference type="NCBIfam" id="TIGR01393">
    <property type="entry name" value="lepA"/>
    <property type="match status" value="1"/>
</dbReference>
<dbReference type="NCBIfam" id="TIGR00231">
    <property type="entry name" value="small_GTP"/>
    <property type="match status" value="1"/>
</dbReference>
<dbReference type="PANTHER" id="PTHR43512:SF4">
    <property type="entry name" value="TRANSLATION FACTOR GUF1 HOMOLOG, CHLOROPLASTIC"/>
    <property type="match status" value="1"/>
</dbReference>
<dbReference type="PANTHER" id="PTHR43512">
    <property type="entry name" value="TRANSLATION FACTOR GUF1-RELATED"/>
    <property type="match status" value="1"/>
</dbReference>
<dbReference type="Pfam" id="PF00679">
    <property type="entry name" value="EFG_C"/>
    <property type="match status" value="1"/>
</dbReference>
<dbReference type="Pfam" id="PF00009">
    <property type="entry name" value="GTP_EFTU"/>
    <property type="match status" value="1"/>
</dbReference>
<dbReference type="Pfam" id="PF03144">
    <property type="entry name" value="GTP_EFTU_D2"/>
    <property type="match status" value="1"/>
</dbReference>
<dbReference type="Pfam" id="PF06421">
    <property type="entry name" value="LepA_C"/>
    <property type="match status" value="1"/>
</dbReference>
<dbReference type="PRINTS" id="PR00315">
    <property type="entry name" value="ELONGATNFCT"/>
</dbReference>
<dbReference type="SUPFAM" id="SSF54980">
    <property type="entry name" value="EF-G C-terminal domain-like"/>
    <property type="match status" value="2"/>
</dbReference>
<dbReference type="SUPFAM" id="SSF52540">
    <property type="entry name" value="P-loop containing nucleoside triphosphate hydrolases"/>
    <property type="match status" value="1"/>
</dbReference>
<dbReference type="PROSITE" id="PS00301">
    <property type="entry name" value="G_TR_1"/>
    <property type="match status" value="1"/>
</dbReference>
<dbReference type="PROSITE" id="PS51722">
    <property type="entry name" value="G_TR_2"/>
    <property type="match status" value="1"/>
</dbReference>
<keyword id="KW-0997">Cell inner membrane</keyword>
<keyword id="KW-1003">Cell membrane</keyword>
<keyword id="KW-0342">GTP-binding</keyword>
<keyword id="KW-0378">Hydrolase</keyword>
<keyword id="KW-0472">Membrane</keyword>
<keyword id="KW-0547">Nucleotide-binding</keyword>
<keyword id="KW-0648">Protein biosynthesis</keyword>
<proteinExistence type="inferred from homology"/>
<comment type="function">
    <text evidence="1">Required for accurate and efficient protein synthesis under certain stress conditions. May act as a fidelity factor of the translation reaction, by catalyzing a one-codon backward translocation of tRNAs on improperly translocated ribosomes. Back-translocation proceeds from a post-translocation (POST) complex to a pre-translocation (PRE) complex, thus giving elongation factor G a second chance to translocate the tRNAs correctly. Binds to ribosomes in a GTP-dependent manner.</text>
</comment>
<comment type="catalytic activity">
    <reaction evidence="1">
        <text>GTP + H2O = GDP + phosphate + H(+)</text>
        <dbReference type="Rhea" id="RHEA:19669"/>
        <dbReference type="ChEBI" id="CHEBI:15377"/>
        <dbReference type="ChEBI" id="CHEBI:15378"/>
        <dbReference type="ChEBI" id="CHEBI:37565"/>
        <dbReference type="ChEBI" id="CHEBI:43474"/>
        <dbReference type="ChEBI" id="CHEBI:58189"/>
        <dbReference type="EC" id="3.6.5.n1"/>
    </reaction>
</comment>
<comment type="subcellular location">
    <subcellularLocation>
        <location evidence="1">Cell inner membrane</location>
        <topology evidence="1">Peripheral membrane protein</topology>
        <orientation evidence="1">Cytoplasmic side</orientation>
    </subcellularLocation>
</comment>
<comment type="similarity">
    <text evidence="1">Belongs to the TRAFAC class translation factor GTPase superfamily. Classic translation factor GTPase family. LepA subfamily.</text>
</comment>
<accession>Q1R8G3</accession>
<sequence>MKNIRNFSIIAHIDHGKSTLSDRIIQICGGLSDREMEAQVLDSMDLERERGITIKAQSVTLDYKASDGETYQLNFIDTPGHVDFSYEVSRSLAACEGALLVVDAGQGVEAQTLANCYTAMEMDLEVVPVLNKIDLPAADPERVAEEIEDIVGIDATDAVRCSAKTGVGVQDVLERLVRDIPPPEGDPEGPLQALIIDSWFDNYLGVVSLIRIKNGTLRKGDKVKVMSTGQTYNADRLGIFTPKQVDRTELKCGEVGWLVCAIKDIHGAPVGDTLTLARNPAEKALPGFKKVKPQVYAGLFPVSSDDYEAFRDALGKLSLNDASLFYEPESSSALGFGFRCGFLGLLHMEIIQERLEREYDLDLITTAPTVVYEVETTSREVIYVDSPSKLPAVNNIYELREPIAECHMLLPQAYLGNVITLCVEKRGVQTNMVYHGNQVALTYEIPMAEVVLDFFDRLKSTSRGYASLDYNFKRFQASDMVRVDVLINGERVDALALITHRGNSQNRGRELVEKMKDLIPRQQFDIAIQAAIGTHIIARSTVKQLRKNVLAKCYGGDISRKKKLLQKQKEGKKRMKQIGNVELPQEAFLAILHVGKDNK</sequence>
<organism>
    <name type="scientific">Escherichia coli (strain UTI89 / UPEC)</name>
    <dbReference type="NCBI Taxonomy" id="364106"/>
    <lineage>
        <taxon>Bacteria</taxon>
        <taxon>Pseudomonadati</taxon>
        <taxon>Pseudomonadota</taxon>
        <taxon>Gammaproteobacteria</taxon>
        <taxon>Enterobacterales</taxon>
        <taxon>Enterobacteriaceae</taxon>
        <taxon>Escherichia</taxon>
    </lineage>
</organism>
<protein>
    <recommendedName>
        <fullName evidence="1">Elongation factor 4</fullName>
        <shortName evidence="1">EF-4</shortName>
        <ecNumber evidence="1">3.6.5.n1</ecNumber>
    </recommendedName>
    <alternativeName>
        <fullName evidence="1">Ribosomal back-translocase LepA</fullName>
    </alternativeName>
</protein>
<gene>
    <name evidence="1" type="primary">lepA</name>
    <name type="ordered locus">UTI89_C2891</name>
</gene>
<feature type="chain" id="PRO_0000265655" description="Elongation factor 4">
    <location>
        <begin position="1"/>
        <end position="599"/>
    </location>
</feature>
<feature type="domain" description="tr-type G">
    <location>
        <begin position="2"/>
        <end position="184"/>
    </location>
</feature>
<feature type="binding site" evidence="1">
    <location>
        <begin position="14"/>
        <end position="19"/>
    </location>
    <ligand>
        <name>GTP</name>
        <dbReference type="ChEBI" id="CHEBI:37565"/>
    </ligand>
</feature>
<feature type="binding site" evidence="1">
    <location>
        <begin position="131"/>
        <end position="134"/>
    </location>
    <ligand>
        <name>GTP</name>
        <dbReference type="ChEBI" id="CHEBI:37565"/>
    </ligand>
</feature>